<name>MNMG_CERS5</name>
<keyword id="KW-0963">Cytoplasm</keyword>
<keyword id="KW-0274">FAD</keyword>
<keyword id="KW-0285">Flavoprotein</keyword>
<keyword id="KW-0520">NAD</keyword>
<keyword id="KW-0819">tRNA processing</keyword>
<protein>
    <recommendedName>
        <fullName evidence="1">tRNA uridine 5-carboxymethylaminomethyl modification enzyme MnmG</fullName>
    </recommendedName>
    <alternativeName>
        <fullName evidence="1">Glucose-inhibited division protein A</fullName>
    </alternativeName>
</protein>
<reference key="1">
    <citation type="submission" date="2007-04" db="EMBL/GenBank/DDBJ databases">
        <title>Complete sequence of chromosome of Rhodobacter sphaeroides ATCC 17025.</title>
        <authorList>
            <consortium name="US DOE Joint Genome Institute"/>
            <person name="Copeland A."/>
            <person name="Lucas S."/>
            <person name="Lapidus A."/>
            <person name="Barry K."/>
            <person name="Detter J.C."/>
            <person name="Glavina del Rio T."/>
            <person name="Hammon N."/>
            <person name="Israni S."/>
            <person name="Dalin E."/>
            <person name="Tice H."/>
            <person name="Pitluck S."/>
            <person name="Chertkov O."/>
            <person name="Brettin T."/>
            <person name="Bruce D."/>
            <person name="Han C."/>
            <person name="Schmutz J."/>
            <person name="Larimer F."/>
            <person name="Land M."/>
            <person name="Hauser L."/>
            <person name="Kyrpides N."/>
            <person name="Kim E."/>
            <person name="Richardson P."/>
            <person name="Mackenzie C."/>
            <person name="Choudhary M."/>
            <person name="Donohue T.J."/>
            <person name="Kaplan S."/>
        </authorList>
    </citation>
    <scope>NUCLEOTIDE SEQUENCE [LARGE SCALE GENOMIC DNA]</scope>
    <source>
        <strain>ATCC 17025 / ATH 2.4.3</strain>
    </source>
</reference>
<dbReference type="EMBL" id="CP000661">
    <property type="protein sequence ID" value="ABP71553.1"/>
    <property type="molecule type" value="Genomic_DNA"/>
</dbReference>
<dbReference type="SMR" id="A4WVY9"/>
<dbReference type="STRING" id="349102.Rsph17025_2666"/>
<dbReference type="KEGG" id="rsq:Rsph17025_2666"/>
<dbReference type="eggNOG" id="COG0445">
    <property type="taxonomic scope" value="Bacteria"/>
</dbReference>
<dbReference type="HOGENOM" id="CLU_007831_2_2_5"/>
<dbReference type="GO" id="GO:0005829">
    <property type="term" value="C:cytosol"/>
    <property type="evidence" value="ECO:0007669"/>
    <property type="project" value="TreeGrafter"/>
</dbReference>
<dbReference type="GO" id="GO:0050660">
    <property type="term" value="F:flavin adenine dinucleotide binding"/>
    <property type="evidence" value="ECO:0007669"/>
    <property type="project" value="UniProtKB-UniRule"/>
</dbReference>
<dbReference type="GO" id="GO:0030488">
    <property type="term" value="P:tRNA methylation"/>
    <property type="evidence" value="ECO:0007669"/>
    <property type="project" value="TreeGrafter"/>
</dbReference>
<dbReference type="GO" id="GO:0002098">
    <property type="term" value="P:tRNA wobble uridine modification"/>
    <property type="evidence" value="ECO:0007669"/>
    <property type="project" value="InterPro"/>
</dbReference>
<dbReference type="FunFam" id="3.50.50.60:FF:000082">
    <property type="entry name" value="protein MTO1 homolog, mitochondrial isoform X1"/>
    <property type="match status" value="1"/>
</dbReference>
<dbReference type="FunFam" id="1.10.150.570:FF:000001">
    <property type="entry name" value="tRNA uridine 5-carboxymethylaminomethyl modification enzyme MnmG"/>
    <property type="match status" value="1"/>
</dbReference>
<dbReference type="FunFam" id="3.50.50.60:FF:000002">
    <property type="entry name" value="tRNA uridine 5-carboxymethylaminomethyl modification enzyme MnmG"/>
    <property type="match status" value="1"/>
</dbReference>
<dbReference type="Gene3D" id="3.50.50.60">
    <property type="entry name" value="FAD/NAD(P)-binding domain"/>
    <property type="match status" value="2"/>
</dbReference>
<dbReference type="Gene3D" id="1.10.150.570">
    <property type="entry name" value="GidA associated domain, C-terminal subdomain"/>
    <property type="match status" value="1"/>
</dbReference>
<dbReference type="HAMAP" id="MF_00129">
    <property type="entry name" value="MnmG_GidA"/>
    <property type="match status" value="1"/>
</dbReference>
<dbReference type="InterPro" id="IPR036188">
    <property type="entry name" value="FAD/NAD-bd_sf"/>
</dbReference>
<dbReference type="InterPro" id="IPR049312">
    <property type="entry name" value="GIDA_C_N"/>
</dbReference>
<dbReference type="InterPro" id="IPR004416">
    <property type="entry name" value="MnmG"/>
</dbReference>
<dbReference type="InterPro" id="IPR002218">
    <property type="entry name" value="MnmG-rel"/>
</dbReference>
<dbReference type="InterPro" id="IPR020595">
    <property type="entry name" value="MnmG-rel_CS"/>
</dbReference>
<dbReference type="InterPro" id="IPR026904">
    <property type="entry name" value="MnmG_C"/>
</dbReference>
<dbReference type="InterPro" id="IPR047001">
    <property type="entry name" value="MnmG_C_subdom"/>
</dbReference>
<dbReference type="InterPro" id="IPR044920">
    <property type="entry name" value="MnmG_C_subdom_sf"/>
</dbReference>
<dbReference type="InterPro" id="IPR040131">
    <property type="entry name" value="MnmG_N"/>
</dbReference>
<dbReference type="NCBIfam" id="TIGR00136">
    <property type="entry name" value="mnmG_gidA"/>
    <property type="match status" value="1"/>
</dbReference>
<dbReference type="PANTHER" id="PTHR11806">
    <property type="entry name" value="GLUCOSE INHIBITED DIVISION PROTEIN A"/>
    <property type="match status" value="1"/>
</dbReference>
<dbReference type="PANTHER" id="PTHR11806:SF0">
    <property type="entry name" value="PROTEIN MTO1 HOMOLOG, MITOCHONDRIAL"/>
    <property type="match status" value="1"/>
</dbReference>
<dbReference type="Pfam" id="PF01134">
    <property type="entry name" value="GIDA"/>
    <property type="match status" value="1"/>
</dbReference>
<dbReference type="Pfam" id="PF21680">
    <property type="entry name" value="GIDA_C_1st"/>
    <property type="match status" value="1"/>
</dbReference>
<dbReference type="Pfam" id="PF13932">
    <property type="entry name" value="SAM_GIDA_C"/>
    <property type="match status" value="1"/>
</dbReference>
<dbReference type="PRINTS" id="PR00411">
    <property type="entry name" value="PNDRDTASEI"/>
</dbReference>
<dbReference type="SMART" id="SM01228">
    <property type="entry name" value="GIDA_assoc_3"/>
    <property type="match status" value="1"/>
</dbReference>
<dbReference type="SUPFAM" id="SSF51905">
    <property type="entry name" value="FAD/NAD(P)-binding domain"/>
    <property type="match status" value="1"/>
</dbReference>
<dbReference type="PROSITE" id="PS01280">
    <property type="entry name" value="GIDA_1"/>
    <property type="match status" value="1"/>
</dbReference>
<dbReference type="PROSITE" id="PS01281">
    <property type="entry name" value="GIDA_2"/>
    <property type="match status" value="1"/>
</dbReference>
<accession>A4WVY9</accession>
<gene>
    <name evidence="1" type="primary">mnmG</name>
    <name evidence="1" type="synonym">gidA</name>
    <name type="ordered locus">Rsph17025_2666</name>
</gene>
<sequence length="624" mass="67808">MFHVKQFDVIVIGGGHAGCEAAAAAARMGVRAALVTLRPSDLGVMSCNPAIGGLGKGHLVREIDALDGLMGRAADAAGIQFRLLNRKKGPAVQGPRAQADRRLYRAAMQRFLLEQPGLDVVEGEVVDLLLDQGTATGVLLADGTRLDAKAVVLTSGTFLNGTIHIGHDRRPGGRMGDLPSIPLAQRLMDLNLSRGRLKTGTPPRLDGRTIDWTQLEMQPGDADPVMFSFLNHAPVARQISCGITSTNERTHEIVRDNLHQSAMYGGHIEGVGPRYCPSIEDKIVRFADKTGHQVFLEPEGLDDHTVYPNGISTSLPAEVQESYVRTIAGLEEVKILQPGYAIEYDYFDPRELRPTLEVKAMCGLYFAGQINGTTGYEEAAAQGLAAGLNAALAVRGREPLHFSRSDSYIGVMIDDLTSRGVTEPYRMFTSRAEFRLSLRADNADQRLTQTGIDLGCVGPARRDAFLTKMDSLSRGRTMLQQVMLTPTDLARLEIRISQDGTRRSAFDVMAFGEEAASAVERAVPELALLPHDIRQQLARDALYAQFIARQELEAQSLKRDEAVRIPSDFDYGSLSGLSHELTAKLLHARPATIAQAARLEGMTPSALMLILSRLRRASRSAAAG</sequence>
<feature type="chain" id="PRO_0000345324" description="tRNA uridine 5-carboxymethylaminomethyl modification enzyme MnmG">
    <location>
        <begin position="1"/>
        <end position="624"/>
    </location>
</feature>
<feature type="binding site" evidence="1">
    <location>
        <begin position="13"/>
        <end position="18"/>
    </location>
    <ligand>
        <name>FAD</name>
        <dbReference type="ChEBI" id="CHEBI:57692"/>
    </ligand>
</feature>
<feature type="binding site" evidence="1">
    <location>
        <position position="125"/>
    </location>
    <ligand>
        <name>FAD</name>
        <dbReference type="ChEBI" id="CHEBI:57692"/>
    </ligand>
</feature>
<feature type="binding site" evidence="1">
    <location>
        <position position="180"/>
    </location>
    <ligand>
        <name>FAD</name>
        <dbReference type="ChEBI" id="CHEBI:57692"/>
    </ligand>
</feature>
<feature type="binding site" evidence="1">
    <location>
        <begin position="272"/>
        <end position="286"/>
    </location>
    <ligand>
        <name>NAD(+)</name>
        <dbReference type="ChEBI" id="CHEBI:57540"/>
    </ligand>
</feature>
<feature type="binding site" evidence="1">
    <location>
        <position position="369"/>
    </location>
    <ligand>
        <name>FAD</name>
        <dbReference type="ChEBI" id="CHEBI:57692"/>
    </ligand>
</feature>
<evidence type="ECO:0000255" key="1">
    <source>
        <dbReference type="HAMAP-Rule" id="MF_00129"/>
    </source>
</evidence>
<organism>
    <name type="scientific">Cereibacter sphaeroides (strain ATCC 17025 / ATH 2.4.3)</name>
    <name type="common">Rhodobacter sphaeroides</name>
    <dbReference type="NCBI Taxonomy" id="349102"/>
    <lineage>
        <taxon>Bacteria</taxon>
        <taxon>Pseudomonadati</taxon>
        <taxon>Pseudomonadota</taxon>
        <taxon>Alphaproteobacteria</taxon>
        <taxon>Rhodobacterales</taxon>
        <taxon>Paracoccaceae</taxon>
        <taxon>Cereibacter</taxon>
    </lineage>
</organism>
<comment type="function">
    <text evidence="1">NAD-binding protein involved in the addition of a carboxymethylaminomethyl (cmnm) group at the wobble position (U34) of certain tRNAs, forming tRNA-cmnm(5)s(2)U34.</text>
</comment>
<comment type="cofactor">
    <cofactor evidence="1">
        <name>FAD</name>
        <dbReference type="ChEBI" id="CHEBI:57692"/>
    </cofactor>
</comment>
<comment type="subunit">
    <text evidence="1">Homodimer. Heterotetramer of two MnmE and two MnmG subunits.</text>
</comment>
<comment type="subcellular location">
    <subcellularLocation>
        <location evidence="1">Cytoplasm</location>
    </subcellularLocation>
</comment>
<comment type="similarity">
    <text evidence="1">Belongs to the MnmG family.</text>
</comment>
<proteinExistence type="inferred from homology"/>